<accession>A5DZX2</accession>
<keyword id="KW-0067">ATP-binding</keyword>
<keyword id="KW-0963">Cytoplasm</keyword>
<keyword id="KW-0347">Helicase</keyword>
<keyword id="KW-0378">Hydrolase</keyword>
<keyword id="KW-0472">Membrane</keyword>
<keyword id="KW-0509">mRNA transport</keyword>
<keyword id="KW-0906">Nuclear pore complex</keyword>
<keyword id="KW-0547">Nucleotide-binding</keyword>
<keyword id="KW-0539">Nucleus</keyword>
<keyword id="KW-0653">Protein transport</keyword>
<keyword id="KW-1185">Reference proteome</keyword>
<keyword id="KW-0694">RNA-binding</keyword>
<keyword id="KW-0811">Translocation</keyword>
<keyword id="KW-0813">Transport</keyword>
<protein>
    <recommendedName>
        <fullName>ATP-dependent RNA helicase DBP5</fullName>
        <ecNumber>3.6.4.13</ecNumber>
    </recommendedName>
</protein>
<proteinExistence type="inferred from homology"/>
<evidence type="ECO:0000250" key="1"/>
<evidence type="ECO:0000255" key="2">
    <source>
        <dbReference type="PROSITE-ProRule" id="PRU00541"/>
    </source>
</evidence>
<evidence type="ECO:0000255" key="3">
    <source>
        <dbReference type="PROSITE-ProRule" id="PRU00542"/>
    </source>
</evidence>
<evidence type="ECO:0000256" key="4">
    <source>
        <dbReference type="SAM" id="MobiDB-lite"/>
    </source>
</evidence>
<evidence type="ECO:0000305" key="5"/>
<dbReference type="EC" id="3.6.4.13"/>
<dbReference type="EMBL" id="CH981526">
    <property type="protein sequence ID" value="EDK44730.1"/>
    <property type="molecule type" value="Genomic_DNA"/>
</dbReference>
<dbReference type="RefSeq" id="XP_001526351.1">
    <property type="nucleotide sequence ID" value="XM_001526301.1"/>
</dbReference>
<dbReference type="SMR" id="A5DZX2"/>
<dbReference type="FunCoup" id="A5DZX2">
    <property type="interactions" value="759"/>
</dbReference>
<dbReference type="STRING" id="379508.A5DZX2"/>
<dbReference type="GeneID" id="5232917"/>
<dbReference type="KEGG" id="lel:PVL30_003743"/>
<dbReference type="VEuPathDB" id="FungiDB:LELG_02909"/>
<dbReference type="eggNOG" id="KOG0332">
    <property type="taxonomic scope" value="Eukaryota"/>
</dbReference>
<dbReference type="HOGENOM" id="CLU_003041_1_0_1"/>
<dbReference type="InParanoid" id="A5DZX2"/>
<dbReference type="OMA" id="IAAETRW"/>
<dbReference type="OrthoDB" id="10265785at2759"/>
<dbReference type="Proteomes" id="UP000001996">
    <property type="component" value="Unassembled WGS sequence"/>
</dbReference>
<dbReference type="GO" id="GO:0005934">
    <property type="term" value="C:cellular bud tip"/>
    <property type="evidence" value="ECO:0007669"/>
    <property type="project" value="EnsemblFungi"/>
</dbReference>
<dbReference type="GO" id="GO:0010494">
    <property type="term" value="C:cytoplasmic stress granule"/>
    <property type="evidence" value="ECO:0007669"/>
    <property type="project" value="EnsemblFungi"/>
</dbReference>
<dbReference type="GO" id="GO:0031965">
    <property type="term" value="C:nuclear membrane"/>
    <property type="evidence" value="ECO:0007669"/>
    <property type="project" value="UniProtKB-SubCell"/>
</dbReference>
<dbReference type="GO" id="GO:0044614">
    <property type="term" value="C:nuclear pore cytoplasmic filaments"/>
    <property type="evidence" value="ECO:0007669"/>
    <property type="project" value="EnsemblFungi"/>
</dbReference>
<dbReference type="GO" id="GO:0005524">
    <property type="term" value="F:ATP binding"/>
    <property type="evidence" value="ECO:0007669"/>
    <property type="project" value="UniProtKB-KW"/>
</dbReference>
<dbReference type="GO" id="GO:0016887">
    <property type="term" value="F:ATP hydrolysis activity"/>
    <property type="evidence" value="ECO:0007669"/>
    <property type="project" value="RHEA"/>
</dbReference>
<dbReference type="GO" id="GO:0000822">
    <property type="term" value="F:inositol hexakisphosphate binding"/>
    <property type="evidence" value="ECO:0007669"/>
    <property type="project" value="EnsemblFungi"/>
</dbReference>
<dbReference type="GO" id="GO:0003723">
    <property type="term" value="F:RNA binding"/>
    <property type="evidence" value="ECO:0007669"/>
    <property type="project" value="UniProtKB-KW"/>
</dbReference>
<dbReference type="GO" id="GO:0003724">
    <property type="term" value="F:RNA helicase activity"/>
    <property type="evidence" value="ECO:0007669"/>
    <property type="project" value="UniProtKB-EC"/>
</dbReference>
<dbReference type="GO" id="GO:0016973">
    <property type="term" value="P:poly(A)+ mRNA export from nucleus"/>
    <property type="evidence" value="ECO:0007669"/>
    <property type="project" value="EnsemblFungi"/>
</dbReference>
<dbReference type="GO" id="GO:0015031">
    <property type="term" value="P:protein transport"/>
    <property type="evidence" value="ECO:0007669"/>
    <property type="project" value="UniProtKB-KW"/>
</dbReference>
<dbReference type="GO" id="GO:0006415">
    <property type="term" value="P:translational termination"/>
    <property type="evidence" value="ECO:0007669"/>
    <property type="project" value="EnsemblFungi"/>
</dbReference>
<dbReference type="GO" id="GO:0006409">
    <property type="term" value="P:tRNA export from nucleus"/>
    <property type="evidence" value="ECO:0007669"/>
    <property type="project" value="EnsemblFungi"/>
</dbReference>
<dbReference type="CDD" id="cd17963">
    <property type="entry name" value="DEADc_DDX19_DDX25"/>
    <property type="match status" value="1"/>
</dbReference>
<dbReference type="CDD" id="cd18787">
    <property type="entry name" value="SF2_C_DEAD"/>
    <property type="match status" value="1"/>
</dbReference>
<dbReference type="FunFam" id="3.40.50.300:FF:000849">
    <property type="entry name" value="ATP-dependent RNA helicase DBP5"/>
    <property type="match status" value="1"/>
</dbReference>
<dbReference type="FunFam" id="3.40.50.300:FF:000318">
    <property type="entry name" value="ATP-dependent RNA helicase DDX19B"/>
    <property type="match status" value="1"/>
</dbReference>
<dbReference type="Gene3D" id="3.40.50.300">
    <property type="entry name" value="P-loop containing nucleotide triphosphate hydrolases"/>
    <property type="match status" value="2"/>
</dbReference>
<dbReference type="InterPro" id="IPR011545">
    <property type="entry name" value="DEAD/DEAH_box_helicase_dom"/>
</dbReference>
<dbReference type="InterPro" id="IPR014001">
    <property type="entry name" value="Helicase_ATP-bd"/>
</dbReference>
<dbReference type="InterPro" id="IPR001650">
    <property type="entry name" value="Helicase_C-like"/>
</dbReference>
<dbReference type="InterPro" id="IPR027417">
    <property type="entry name" value="P-loop_NTPase"/>
</dbReference>
<dbReference type="InterPro" id="IPR000629">
    <property type="entry name" value="RNA-helicase_DEAD-box_CS"/>
</dbReference>
<dbReference type="InterPro" id="IPR014014">
    <property type="entry name" value="RNA_helicase_DEAD_Q_motif"/>
</dbReference>
<dbReference type="PANTHER" id="PTHR47958">
    <property type="entry name" value="ATP-DEPENDENT RNA HELICASE DBP3"/>
    <property type="match status" value="1"/>
</dbReference>
<dbReference type="Pfam" id="PF00270">
    <property type="entry name" value="DEAD"/>
    <property type="match status" value="1"/>
</dbReference>
<dbReference type="Pfam" id="PF00271">
    <property type="entry name" value="Helicase_C"/>
    <property type="match status" value="1"/>
</dbReference>
<dbReference type="SMART" id="SM00487">
    <property type="entry name" value="DEXDc"/>
    <property type="match status" value="1"/>
</dbReference>
<dbReference type="SMART" id="SM00490">
    <property type="entry name" value="HELICc"/>
    <property type="match status" value="1"/>
</dbReference>
<dbReference type="SUPFAM" id="SSF52540">
    <property type="entry name" value="P-loop containing nucleoside triphosphate hydrolases"/>
    <property type="match status" value="1"/>
</dbReference>
<dbReference type="PROSITE" id="PS00039">
    <property type="entry name" value="DEAD_ATP_HELICASE"/>
    <property type="match status" value="1"/>
</dbReference>
<dbReference type="PROSITE" id="PS51192">
    <property type="entry name" value="HELICASE_ATP_BIND_1"/>
    <property type="match status" value="1"/>
</dbReference>
<dbReference type="PROSITE" id="PS51194">
    <property type="entry name" value="HELICASE_CTER"/>
    <property type="match status" value="1"/>
</dbReference>
<dbReference type="PROSITE" id="PS51195">
    <property type="entry name" value="Q_MOTIF"/>
    <property type="match status" value="1"/>
</dbReference>
<comment type="function">
    <text evidence="1">ATP-dependent RNA helicase associated with the nuclear pore complex and essential for mRNA export from the nucleus. May participate in a terminal step of mRNA export through the removal of proteins that accompany mRNA through the nucleopore complex. May also be involved in early transcription (By similarity).</text>
</comment>
<comment type="catalytic activity">
    <reaction>
        <text>ATP + H2O = ADP + phosphate + H(+)</text>
        <dbReference type="Rhea" id="RHEA:13065"/>
        <dbReference type="ChEBI" id="CHEBI:15377"/>
        <dbReference type="ChEBI" id="CHEBI:15378"/>
        <dbReference type="ChEBI" id="CHEBI:30616"/>
        <dbReference type="ChEBI" id="CHEBI:43474"/>
        <dbReference type="ChEBI" id="CHEBI:456216"/>
        <dbReference type="EC" id="3.6.4.13"/>
    </reaction>
</comment>
<comment type="subunit">
    <text evidence="1">Associates with the nuclear pore complex.</text>
</comment>
<comment type="subcellular location">
    <subcellularLocation>
        <location evidence="1">Cytoplasm</location>
    </subcellularLocation>
    <subcellularLocation>
        <location>Nucleus</location>
        <location>Nuclear pore complex</location>
    </subcellularLocation>
    <subcellularLocation>
        <location evidence="1">Nucleus membrane</location>
        <topology evidence="1">Peripheral membrane protein</topology>
        <orientation evidence="1">Cytoplasmic side</orientation>
    </subcellularLocation>
    <text evidence="1">Nuclear pore complex cytoplasmic fibrils.</text>
</comment>
<comment type="domain">
    <text>The Q motif is unique to and characteristic of the DEAD box family of RNA helicases and controls ATP binding and hydrolysis.</text>
</comment>
<comment type="similarity">
    <text evidence="5">Belongs to the DEAD box helicase family. DDX19/DBP5 subfamily.</text>
</comment>
<reference key="1">
    <citation type="journal article" date="2009" name="Nature">
        <title>Evolution of pathogenicity and sexual reproduction in eight Candida genomes.</title>
        <authorList>
            <person name="Butler G."/>
            <person name="Rasmussen M.D."/>
            <person name="Lin M.F."/>
            <person name="Santos M.A.S."/>
            <person name="Sakthikumar S."/>
            <person name="Munro C.A."/>
            <person name="Rheinbay E."/>
            <person name="Grabherr M."/>
            <person name="Forche A."/>
            <person name="Reedy J.L."/>
            <person name="Agrafioti I."/>
            <person name="Arnaud M.B."/>
            <person name="Bates S."/>
            <person name="Brown A.J.P."/>
            <person name="Brunke S."/>
            <person name="Costanzo M.C."/>
            <person name="Fitzpatrick D.A."/>
            <person name="de Groot P.W.J."/>
            <person name="Harris D."/>
            <person name="Hoyer L.L."/>
            <person name="Hube B."/>
            <person name="Klis F.M."/>
            <person name="Kodira C."/>
            <person name="Lennard N."/>
            <person name="Logue M.E."/>
            <person name="Martin R."/>
            <person name="Neiman A.M."/>
            <person name="Nikolaou E."/>
            <person name="Quail M.A."/>
            <person name="Quinn J."/>
            <person name="Santos M.C."/>
            <person name="Schmitzberger F.F."/>
            <person name="Sherlock G."/>
            <person name="Shah P."/>
            <person name="Silverstein K.A.T."/>
            <person name="Skrzypek M.S."/>
            <person name="Soll D."/>
            <person name="Staggs R."/>
            <person name="Stansfield I."/>
            <person name="Stumpf M.P.H."/>
            <person name="Sudbery P.E."/>
            <person name="Srikantha T."/>
            <person name="Zeng Q."/>
            <person name="Berman J."/>
            <person name="Berriman M."/>
            <person name="Heitman J."/>
            <person name="Gow N.A.R."/>
            <person name="Lorenz M.C."/>
            <person name="Birren B.W."/>
            <person name="Kellis M."/>
            <person name="Cuomo C.A."/>
        </authorList>
    </citation>
    <scope>NUCLEOTIDE SEQUENCE [LARGE SCALE GENOMIC DNA]</scope>
    <source>
        <strain>ATCC 11503 / BCRC 21390 / CBS 2605 / JCM 1781 / NBRC 1676 / NRRL YB-4239</strain>
    </source>
</reference>
<gene>
    <name type="primary">DBP5</name>
    <name type="ORF">LELG_02909</name>
</gene>
<sequence>MSNTKDVDADASNLLASLSVSKEKKEDTSNILAGLSLNGDESNKKEGSGVKDTESDKQKGNGKVEKVEKDENKDKSQSEAKDDSKRETNLIENRYEVEVKLDDIQADPNSPLYSVKSFEELGLKPELLKGLYAMKFNKPSKIQERALPLLISNPPKNMIGQSQSGTGKTAAFSLTMLSRVDESIKAPQCICLAPTRELARQTLEVVETMGKYSNITYQLVVPDSVPRGQAISAQVLVGTPGIVHDLINRKAINVAKVKVFVLDEADNMLDAQGLADTCLRVKKRLPRDCQLVLFSATFPTEVRKYAEKFVPNANSLALKQEELNVKGIKQLYMDCKNQEHKFEVLCELYGLLTIGSSIIFVEQKATADSLYLRMKEEGHTVSILHGGLEVADRDRLIDDFREGRSKVLITTNVLARGIDIATVSMVVNYDLPRTKEGRPDPSTYLHRIGRTGRFGRVGVSVSFVANEKDYQTLKYIAEYFGIEDQMTVVPTDDWDEVEKIVTRVIKEKKMT</sequence>
<organism>
    <name type="scientific">Lodderomyces elongisporus (strain ATCC 11503 / CBS 2605 / JCM 1781 / NBRC 1676 / NRRL YB-4239)</name>
    <name type="common">Yeast</name>
    <name type="synonym">Saccharomyces elongisporus</name>
    <dbReference type="NCBI Taxonomy" id="379508"/>
    <lineage>
        <taxon>Eukaryota</taxon>
        <taxon>Fungi</taxon>
        <taxon>Dikarya</taxon>
        <taxon>Ascomycota</taxon>
        <taxon>Saccharomycotina</taxon>
        <taxon>Pichiomycetes</taxon>
        <taxon>Debaryomycetaceae</taxon>
        <taxon>Candida/Lodderomyces clade</taxon>
        <taxon>Lodderomyces</taxon>
    </lineage>
</organism>
<name>DBP5_LODEL</name>
<feature type="chain" id="PRO_0000294631" description="ATP-dependent RNA helicase DBP5">
    <location>
        <begin position="1"/>
        <end position="511"/>
    </location>
</feature>
<feature type="domain" description="Helicase ATP-binding" evidence="2">
    <location>
        <begin position="149"/>
        <end position="316"/>
    </location>
</feature>
<feature type="domain" description="Helicase C-terminal" evidence="3">
    <location>
        <begin position="327"/>
        <end position="495"/>
    </location>
</feature>
<feature type="region of interest" description="Disordered" evidence="4">
    <location>
        <begin position="18"/>
        <end position="89"/>
    </location>
</feature>
<feature type="short sequence motif" description="Q motif">
    <location>
        <begin position="116"/>
        <end position="144"/>
    </location>
</feature>
<feature type="short sequence motif" description="DEAD box">
    <location>
        <begin position="263"/>
        <end position="266"/>
    </location>
</feature>
<feature type="compositionally biased region" description="Basic and acidic residues" evidence="4">
    <location>
        <begin position="41"/>
        <end position="89"/>
    </location>
</feature>
<feature type="binding site" evidence="2">
    <location>
        <begin position="162"/>
        <end position="169"/>
    </location>
    <ligand>
        <name>ATP</name>
        <dbReference type="ChEBI" id="CHEBI:30616"/>
    </ligand>
</feature>